<reference key="1">
    <citation type="journal article" date="2004" name="Nat. Genet.">
        <title>Complete sequencing and characterization of 21,243 full-length human cDNAs.</title>
        <authorList>
            <person name="Ota T."/>
            <person name="Suzuki Y."/>
            <person name="Nishikawa T."/>
            <person name="Otsuki T."/>
            <person name="Sugiyama T."/>
            <person name="Irie R."/>
            <person name="Wakamatsu A."/>
            <person name="Hayashi K."/>
            <person name="Sato H."/>
            <person name="Nagai K."/>
            <person name="Kimura K."/>
            <person name="Makita H."/>
            <person name="Sekine M."/>
            <person name="Obayashi M."/>
            <person name="Nishi T."/>
            <person name="Shibahara T."/>
            <person name="Tanaka T."/>
            <person name="Ishii S."/>
            <person name="Yamamoto J."/>
            <person name="Saito K."/>
            <person name="Kawai Y."/>
            <person name="Isono Y."/>
            <person name="Nakamura Y."/>
            <person name="Nagahari K."/>
            <person name="Murakami K."/>
            <person name="Yasuda T."/>
            <person name="Iwayanagi T."/>
            <person name="Wagatsuma M."/>
            <person name="Shiratori A."/>
            <person name="Sudo H."/>
            <person name="Hosoiri T."/>
            <person name="Kaku Y."/>
            <person name="Kodaira H."/>
            <person name="Kondo H."/>
            <person name="Sugawara M."/>
            <person name="Takahashi M."/>
            <person name="Kanda K."/>
            <person name="Yokoi T."/>
            <person name="Furuya T."/>
            <person name="Kikkawa E."/>
            <person name="Omura Y."/>
            <person name="Abe K."/>
            <person name="Kamihara K."/>
            <person name="Katsuta N."/>
            <person name="Sato K."/>
            <person name="Tanikawa M."/>
            <person name="Yamazaki M."/>
            <person name="Ninomiya K."/>
            <person name="Ishibashi T."/>
            <person name="Yamashita H."/>
            <person name="Murakawa K."/>
            <person name="Fujimori K."/>
            <person name="Tanai H."/>
            <person name="Kimata M."/>
            <person name="Watanabe M."/>
            <person name="Hiraoka S."/>
            <person name="Chiba Y."/>
            <person name="Ishida S."/>
            <person name="Ono Y."/>
            <person name="Takiguchi S."/>
            <person name="Watanabe S."/>
            <person name="Yosida M."/>
            <person name="Hotuta T."/>
            <person name="Kusano J."/>
            <person name="Kanehori K."/>
            <person name="Takahashi-Fujii A."/>
            <person name="Hara H."/>
            <person name="Tanase T.-O."/>
            <person name="Nomura Y."/>
            <person name="Togiya S."/>
            <person name="Komai F."/>
            <person name="Hara R."/>
            <person name="Takeuchi K."/>
            <person name="Arita M."/>
            <person name="Imose N."/>
            <person name="Musashino K."/>
            <person name="Yuuki H."/>
            <person name="Oshima A."/>
            <person name="Sasaki N."/>
            <person name="Aotsuka S."/>
            <person name="Yoshikawa Y."/>
            <person name="Matsunawa H."/>
            <person name="Ichihara T."/>
            <person name="Shiohata N."/>
            <person name="Sano S."/>
            <person name="Moriya S."/>
            <person name="Momiyama H."/>
            <person name="Satoh N."/>
            <person name="Takami S."/>
            <person name="Terashima Y."/>
            <person name="Suzuki O."/>
            <person name="Nakagawa S."/>
            <person name="Senoh A."/>
            <person name="Mizoguchi H."/>
            <person name="Goto Y."/>
            <person name="Shimizu F."/>
            <person name="Wakebe H."/>
            <person name="Hishigaki H."/>
            <person name="Watanabe T."/>
            <person name="Sugiyama A."/>
            <person name="Takemoto M."/>
            <person name="Kawakami B."/>
            <person name="Yamazaki M."/>
            <person name="Watanabe K."/>
            <person name="Kumagai A."/>
            <person name="Itakura S."/>
            <person name="Fukuzumi Y."/>
            <person name="Fujimori Y."/>
            <person name="Komiyama M."/>
            <person name="Tashiro H."/>
            <person name="Tanigami A."/>
            <person name="Fujiwara T."/>
            <person name="Ono T."/>
            <person name="Yamada K."/>
            <person name="Fujii Y."/>
            <person name="Ozaki K."/>
            <person name="Hirao M."/>
            <person name="Ohmori Y."/>
            <person name="Kawabata A."/>
            <person name="Hikiji T."/>
            <person name="Kobatake N."/>
            <person name="Inagaki H."/>
            <person name="Ikema Y."/>
            <person name="Okamoto S."/>
            <person name="Okitani R."/>
            <person name="Kawakami T."/>
            <person name="Noguchi S."/>
            <person name="Itoh T."/>
            <person name="Shigeta K."/>
            <person name="Senba T."/>
            <person name="Matsumura K."/>
            <person name="Nakajima Y."/>
            <person name="Mizuno T."/>
            <person name="Morinaga M."/>
            <person name="Sasaki M."/>
            <person name="Togashi T."/>
            <person name="Oyama M."/>
            <person name="Hata H."/>
            <person name="Watanabe M."/>
            <person name="Komatsu T."/>
            <person name="Mizushima-Sugano J."/>
            <person name="Satoh T."/>
            <person name="Shirai Y."/>
            <person name="Takahashi Y."/>
            <person name="Nakagawa K."/>
            <person name="Okumura K."/>
            <person name="Nagase T."/>
            <person name="Nomura N."/>
            <person name="Kikuchi H."/>
            <person name="Masuho Y."/>
            <person name="Yamashita R."/>
            <person name="Nakai K."/>
            <person name="Yada T."/>
            <person name="Nakamura Y."/>
            <person name="Ohara O."/>
            <person name="Isogai T."/>
            <person name="Sugano S."/>
        </authorList>
    </citation>
    <scope>NUCLEOTIDE SEQUENCE [LARGE SCALE MRNA] (ISOFORM 3)</scope>
    <scope>VARIANTS PRO-82; ARG-244 AND LEU-928</scope>
    <source>
        <tissue>Spleen</tissue>
    </source>
</reference>
<reference key="2">
    <citation type="journal article" date="2004" name="Nature">
        <title>The sequence and analysis of duplication-rich human chromosome 16.</title>
        <authorList>
            <person name="Martin J."/>
            <person name="Han C."/>
            <person name="Gordon L.A."/>
            <person name="Terry A."/>
            <person name="Prabhakar S."/>
            <person name="She X."/>
            <person name="Xie G."/>
            <person name="Hellsten U."/>
            <person name="Chan Y.M."/>
            <person name="Altherr M."/>
            <person name="Couronne O."/>
            <person name="Aerts A."/>
            <person name="Bajorek E."/>
            <person name="Black S."/>
            <person name="Blumer H."/>
            <person name="Branscomb E."/>
            <person name="Brown N.C."/>
            <person name="Bruno W.J."/>
            <person name="Buckingham J.M."/>
            <person name="Callen D.F."/>
            <person name="Campbell C.S."/>
            <person name="Campbell M.L."/>
            <person name="Campbell E.W."/>
            <person name="Caoile C."/>
            <person name="Challacombe J.F."/>
            <person name="Chasteen L.A."/>
            <person name="Chertkov O."/>
            <person name="Chi H.C."/>
            <person name="Christensen M."/>
            <person name="Clark L.M."/>
            <person name="Cohn J.D."/>
            <person name="Denys M."/>
            <person name="Detter J.C."/>
            <person name="Dickson M."/>
            <person name="Dimitrijevic-Bussod M."/>
            <person name="Escobar J."/>
            <person name="Fawcett J.J."/>
            <person name="Flowers D."/>
            <person name="Fotopulos D."/>
            <person name="Glavina T."/>
            <person name="Gomez M."/>
            <person name="Gonzales E."/>
            <person name="Goodstein D."/>
            <person name="Goodwin L.A."/>
            <person name="Grady D.L."/>
            <person name="Grigoriev I."/>
            <person name="Groza M."/>
            <person name="Hammon N."/>
            <person name="Hawkins T."/>
            <person name="Haydu L."/>
            <person name="Hildebrand C.E."/>
            <person name="Huang W."/>
            <person name="Israni S."/>
            <person name="Jett J."/>
            <person name="Jewett P.B."/>
            <person name="Kadner K."/>
            <person name="Kimball H."/>
            <person name="Kobayashi A."/>
            <person name="Krawczyk M.-C."/>
            <person name="Leyba T."/>
            <person name="Longmire J.L."/>
            <person name="Lopez F."/>
            <person name="Lou Y."/>
            <person name="Lowry S."/>
            <person name="Ludeman T."/>
            <person name="Manohar C.F."/>
            <person name="Mark G.A."/>
            <person name="McMurray K.L."/>
            <person name="Meincke L.J."/>
            <person name="Morgan J."/>
            <person name="Moyzis R.K."/>
            <person name="Mundt M.O."/>
            <person name="Munk A.C."/>
            <person name="Nandkeshwar R.D."/>
            <person name="Pitluck S."/>
            <person name="Pollard M."/>
            <person name="Predki P."/>
            <person name="Parson-Quintana B."/>
            <person name="Ramirez L."/>
            <person name="Rash S."/>
            <person name="Retterer J."/>
            <person name="Ricke D.O."/>
            <person name="Robinson D.L."/>
            <person name="Rodriguez A."/>
            <person name="Salamov A."/>
            <person name="Saunders E.H."/>
            <person name="Scott D."/>
            <person name="Shough T."/>
            <person name="Stallings R.L."/>
            <person name="Stalvey M."/>
            <person name="Sutherland R.D."/>
            <person name="Tapia R."/>
            <person name="Tesmer J.G."/>
            <person name="Thayer N."/>
            <person name="Thompson L.S."/>
            <person name="Tice H."/>
            <person name="Torney D.C."/>
            <person name="Tran-Gyamfi M."/>
            <person name="Tsai M."/>
            <person name="Ulanovsky L.E."/>
            <person name="Ustaszewska A."/>
            <person name="Vo N."/>
            <person name="White P.S."/>
            <person name="Williams A.L."/>
            <person name="Wills P.L."/>
            <person name="Wu J.-R."/>
            <person name="Wu K."/>
            <person name="Yang J."/>
            <person name="DeJong P."/>
            <person name="Bruce D."/>
            <person name="Doggett N.A."/>
            <person name="Deaven L."/>
            <person name="Schmutz J."/>
            <person name="Grimwood J."/>
            <person name="Richardson P."/>
            <person name="Rokhsar D.S."/>
            <person name="Eichler E.E."/>
            <person name="Gilna P."/>
            <person name="Lucas S.M."/>
            <person name="Myers R.M."/>
            <person name="Rubin E.M."/>
            <person name="Pennacchio L.A."/>
        </authorList>
    </citation>
    <scope>NUCLEOTIDE SEQUENCE [LARGE SCALE GENOMIC DNA]</scope>
</reference>
<reference key="3">
    <citation type="submission" date="2005-09" db="EMBL/GenBank/DDBJ databases">
        <authorList>
            <person name="Mural R.J."/>
            <person name="Istrail S."/>
            <person name="Sutton G.G."/>
            <person name="Florea L."/>
            <person name="Halpern A.L."/>
            <person name="Mobarry C.M."/>
            <person name="Lippert R."/>
            <person name="Walenz B."/>
            <person name="Shatkay H."/>
            <person name="Dew I."/>
            <person name="Miller J.R."/>
            <person name="Flanigan M.J."/>
            <person name="Edwards N.J."/>
            <person name="Bolanos R."/>
            <person name="Fasulo D."/>
            <person name="Halldorsson B.V."/>
            <person name="Hannenhalli S."/>
            <person name="Turner R."/>
            <person name="Yooseph S."/>
            <person name="Lu F."/>
            <person name="Nusskern D.R."/>
            <person name="Shue B.C."/>
            <person name="Zheng X.H."/>
            <person name="Zhong F."/>
            <person name="Delcher A.L."/>
            <person name="Huson D.H."/>
            <person name="Kravitz S.A."/>
            <person name="Mouchard L."/>
            <person name="Reinert K."/>
            <person name="Remington K.A."/>
            <person name="Clark A.G."/>
            <person name="Waterman M.S."/>
            <person name="Eichler E.E."/>
            <person name="Adams M.D."/>
            <person name="Hunkapiller M.W."/>
            <person name="Myers E.W."/>
            <person name="Venter J.C."/>
        </authorList>
    </citation>
    <scope>NUCLEOTIDE SEQUENCE [LARGE SCALE GENOMIC DNA]</scope>
</reference>
<reference key="4">
    <citation type="journal article" date="2004" name="Genome Res.">
        <title>The status, quality, and expansion of the NIH full-length cDNA project: the Mammalian Gene Collection (MGC).</title>
        <authorList>
            <consortium name="The MGC Project Team"/>
        </authorList>
    </citation>
    <scope>NUCLEOTIDE SEQUENCE [LARGE SCALE MRNA] (ISOFORMS 1 AND 2)</scope>
    <source>
        <tissue>Brain</tissue>
        <tissue>Lung</tissue>
        <tissue>Placenta</tissue>
    </source>
</reference>
<reference key="5">
    <citation type="journal article" date="2003" name="J. Biol. Chem.">
        <title>Cloning and characterization of hCTF18, hCTF8, and hDCC1. Human homologs of a Saccharomyces cerevisiae complex involved in sister chromatid cohesion establishment.</title>
        <authorList>
            <person name="Merkle C.J."/>
            <person name="Karnitz L.M."/>
            <person name="Henry-Sanchez J.T."/>
            <person name="Chen J."/>
        </authorList>
    </citation>
    <scope>FUNCTION</scope>
    <scope>IDENTIFICATION IN THE CTF18-RFC COMPLEX</scope>
    <scope>INTERACTION WITH PCNA</scope>
    <scope>SUBCELLULAR LOCATION</scope>
</reference>
<reference key="6">
    <citation type="journal article" date="2003" name="Proc. Natl. Acad. Sci. U.S.A.">
        <title>The alternative Ctf18-Dcc1-Ctf8-replication factor C complex required for sister chromatid cohesion loads proliferating cell nuclear antigen onto DNA.</title>
        <authorList>
            <person name="Bermudez V.P."/>
            <person name="Maniwa Y."/>
            <person name="Tappin I."/>
            <person name="Ozato K."/>
            <person name="Yokomori K."/>
            <person name="Hurwitz J."/>
        </authorList>
    </citation>
    <scope>FUNCTION</scope>
    <scope>IDENTIFICATION IN THE CTF18-RFC COMPLEX</scope>
    <scope>INTERACTION WITH SMC1A AND RAD21</scope>
    <scope>IDENTIFICATION BY MASS SPECTROMETRY</scope>
</reference>
<reference key="7">
    <citation type="journal article" date="2006" name="Nat. Biotechnol.">
        <title>A probability-based approach for high-throughput protein phosphorylation analysis and site localization.</title>
        <authorList>
            <person name="Beausoleil S.A."/>
            <person name="Villen J."/>
            <person name="Gerber S.A."/>
            <person name="Rush J."/>
            <person name="Gygi S.P."/>
        </authorList>
    </citation>
    <scope>PHOSPHORYLATION [LARGE SCALE ANALYSIS] AT SER-64 AND SER-871</scope>
    <scope>IDENTIFICATION BY MASS SPECTROMETRY [LARGE SCALE ANALYSIS]</scope>
    <source>
        <tissue>Cervix carcinoma</tissue>
    </source>
</reference>
<reference key="8">
    <citation type="journal article" date="2007" name="J. Biol. Chem.">
        <title>A second proliferating cell nuclear antigen loader complex, Ctf18-replication factor C, stimulates DNA polymerase eta activity.</title>
        <authorList>
            <person name="Shiomi Y."/>
            <person name="Masutani C."/>
            <person name="Hanaoka F."/>
            <person name="Kimura H."/>
            <person name="Tsurimoto T."/>
        </authorList>
    </citation>
    <scope>FUNCTION</scope>
    <scope>INTERACTION WITH POLH</scope>
</reference>
<reference key="9">
    <citation type="journal article" date="2007" name="Science">
        <title>ATM and ATR substrate analysis reveals extensive protein networks responsive to DNA damage.</title>
        <authorList>
            <person name="Matsuoka S."/>
            <person name="Ballif B.A."/>
            <person name="Smogorzewska A."/>
            <person name="McDonald E.R. III"/>
            <person name="Hurov K.E."/>
            <person name="Luo J."/>
            <person name="Bakalarski C.E."/>
            <person name="Zhao Z."/>
            <person name="Solimini N."/>
            <person name="Lerenthal Y."/>
            <person name="Shiloh Y."/>
            <person name="Gygi S.P."/>
            <person name="Elledge S.J."/>
        </authorList>
    </citation>
    <scope>IDENTIFICATION BY MASS SPECTROMETRY [LARGE SCALE ANALYSIS]</scope>
    <source>
        <tissue>Embryonic kidney</tissue>
    </source>
</reference>
<reference key="10">
    <citation type="journal article" date="2008" name="J. Biol. Chem.">
        <title>Studies with the human cohesin establishment factor, ChlR1. Association of ChlR1 with Ctf18-RFC and Fen1.</title>
        <authorList>
            <person name="Farina A."/>
            <person name="Shin J.H."/>
            <person name="Kim D.H."/>
            <person name="Bermudez V.P."/>
            <person name="Kelman Z."/>
            <person name="Seo Y.S."/>
            <person name="Hurwitz J."/>
        </authorList>
    </citation>
    <scope>INTERACTION WITH DDX11</scope>
</reference>
<reference key="11">
    <citation type="journal article" date="2008" name="Mol. Cell">
        <title>Kinase-selective enrichment enables quantitative phosphoproteomics of the kinome across the cell cycle.</title>
        <authorList>
            <person name="Daub H."/>
            <person name="Olsen J.V."/>
            <person name="Bairlein M."/>
            <person name="Gnad F."/>
            <person name="Oppermann F.S."/>
            <person name="Korner R."/>
            <person name="Greff Z."/>
            <person name="Keri G."/>
            <person name="Stemmann O."/>
            <person name="Mann M."/>
        </authorList>
    </citation>
    <scope>PHOSPHORYLATION [LARGE SCALE ANALYSIS] AT SER-871</scope>
    <scope>IDENTIFICATION BY MASS SPECTROMETRY [LARGE SCALE ANALYSIS]</scope>
    <source>
        <tissue>Cervix carcinoma</tissue>
    </source>
</reference>
<reference key="12">
    <citation type="journal article" date="2008" name="Proc. Natl. Acad. Sci. U.S.A.">
        <title>A quantitative atlas of mitotic phosphorylation.</title>
        <authorList>
            <person name="Dephoure N."/>
            <person name="Zhou C."/>
            <person name="Villen J."/>
            <person name="Beausoleil S.A."/>
            <person name="Bakalarski C.E."/>
            <person name="Elledge S.J."/>
            <person name="Gygi S.P."/>
        </authorList>
    </citation>
    <scope>PHOSPHORYLATION [LARGE SCALE ANALYSIS] AT SER-225</scope>
    <scope>IDENTIFICATION BY MASS SPECTROMETRY [LARGE SCALE ANALYSIS]</scope>
    <source>
        <tissue>Cervix carcinoma</tissue>
    </source>
</reference>
<reference key="13">
    <citation type="journal article" date="2009" name="Anal. Chem.">
        <title>Lys-N and trypsin cover complementary parts of the phosphoproteome in a refined SCX-based approach.</title>
        <authorList>
            <person name="Gauci S."/>
            <person name="Helbig A.O."/>
            <person name="Slijper M."/>
            <person name="Krijgsveld J."/>
            <person name="Heck A.J."/>
            <person name="Mohammed S."/>
        </authorList>
    </citation>
    <scope>IDENTIFICATION BY MASS SPECTROMETRY [LARGE SCALE ANALYSIS]</scope>
</reference>
<reference key="14">
    <citation type="journal article" date="2009" name="Sci. Signal.">
        <title>Quantitative phosphoproteomic analysis of T cell receptor signaling reveals system-wide modulation of protein-protein interactions.</title>
        <authorList>
            <person name="Mayya V."/>
            <person name="Lundgren D.H."/>
            <person name="Hwang S.-I."/>
            <person name="Rezaul K."/>
            <person name="Wu L."/>
            <person name="Eng J.K."/>
            <person name="Rodionov V."/>
            <person name="Han D.K."/>
        </authorList>
    </citation>
    <scope>PHOSPHORYLATION [LARGE SCALE ANALYSIS] AT SER-64 AND SER-871</scope>
    <scope>IDENTIFICATION BY MASS SPECTROMETRY [LARGE SCALE ANALYSIS]</scope>
    <source>
        <tissue>Leukemic T-cell</tissue>
    </source>
</reference>
<reference key="15">
    <citation type="journal article" date="2010" name="Mol. Cell">
        <title>Three DNA polymerases, recruited by different mechanisms, carry out NER repair synthesis in human cells.</title>
        <authorList>
            <person name="Ogi T."/>
            <person name="Limsirichaikul S."/>
            <person name="Overmeer R.M."/>
            <person name="Volker M."/>
            <person name="Takenaka K."/>
            <person name="Cloney R."/>
            <person name="Nakazawa Y."/>
            <person name="Niimi A."/>
            <person name="Miki Y."/>
            <person name="Jaspers N.G."/>
            <person name="Mullenders L.H."/>
            <person name="Yamashita S."/>
            <person name="Fousteri M.I."/>
            <person name="Lehmann A.R."/>
        </authorList>
    </citation>
    <scope>FUNCTION</scope>
</reference>
<reference key="16">
    <citation type="journal article" date="2010" name="Sci. Signal.">
        <title>Quantitative phosphoproteomics reveals widespread full phosphorylation site occupancy during mitosis.</title>
        <authorList>
            <person name="Olsen J.V."/>
            <person name="Vermeulen M."/>
            <person name="Santamaria A."/>
            <person name="Kumar C."/>
            <person name="Miller M.L."/>
            <person name="Jensen L.J."/>
            <person name="Gnad F."/>
            <person name="Cox J."/>
            <person name="Jensen T.S."/>
            <person name="Nigg E.A."/>
            <person name="Brunak S."/>
            <person name="Mann M."/>
        </authorList>
    </citation>
    <scope>PHOSPHORYLATION [LARGE SCALE ANALYSIS] AT SER-871</scope>
    <scope>IDENTIFICATION BY MASS SPECTROMETRY [LARGE SCALE ANALYSIS]</scope>
    <source>
        <tissue>Cervix carcinoma</tissue>
    </source>
</reference>
<reference key="17">
    <citation type="journal article" date="2011" name="BMC Syst. Biol.">
        <title>Initial characterization of the human central proteome.</title>
        <authorList>
            <person name="Burkard T.R."/>
            <person name="Planyavsky M."/>
            <person name="Kaupe I."/>
            <person name="Breitwieser F.P."/>
            <person name="Buerckstuemmer T."/>
            <person name="Bennett K.L."/>
            <person name="Superti-Furga G."/>
            <person name="Colinge J."/>
        </authorList>
    </citation>
    <scope>IDENTIFICATION BY MASS SPECTROMETRY [LARGE SCALE ANALYSIS]</scope>
</reference>
<reference key="18">
    <citation type="journal article" date="2011" name="Sci. Signal.">
        <title>System-wide temporal characterization of the proteome and phosphoproteome of human embryonic stem cell differentiation.</title>
        <authorList>
            <person name="Rigbolt K.T."/>
            <person name="Prokhorova T.A."/>
            <person name="Akimov V."/>
            <person name="Henningsen J."/>
            <person name="Johansen P.T."/>
            <person name="Kratchmarova I."/>
            <person name="Kassem M."/>
            <person name="Mann M."/>
            <person name="Olsen J.V."/>
            <person name="Blagoev B."/>
        </authorList>
    </citation>
    <scope>PHOSPHORYLATION [LARGE SCALE ANALYSIS] AT SER-871</scope>
    <scope>IDENTIFICATION BY MASS SPECTROMETRY [LARGE SCALE ANALYSIS]</scope>
</reference>
<reference key="19">
    <citation type="journal article" date="2013" name="J. Proteome Res.">
        <title>Toward a comprehensive characterization of a human cancer cell phosphoproteome.</title>
        <authorList>
            <person name="Zhou H."/>
            <person name="Di Palma S."/>
            <person name="Preisinger C."/>
            <person name="Peng M."/>
            <person name="Polat A.N."/>
            <person name="Heck A.J."/>
            <person name="Mohammed S."/>
        </authorList>
    </citation>
    <scope>PHOSPHORYLATION [LARGE SCALE ANALYSIS] AT THR-51; SER-64; SER-225 AND SER-871</scope>
    <scope>IDENTIFICATION BY MASS SPECTROMETRY [LARGE SCALE ANALYSIS]</scope>
    <source>
        <tissue>Cervix carcinoma</tissue>
        <tissue>Erythroleukemia</tissue>
    </source>
</reference>
<reference key="20">
    <citation type="journal article" date="2024" name="Am. J. Hum. Genet.">
        <title>Expanding the genetic and phenotypic landscape of replication factor C complex-related disorders: RFC4 deficiency is linked to a multisystemic disorder.</title>
        <authorList>
            <consortium name="University of Washington Center for Rare Disease Research"/>
            <consortium name="Undiagnosed Diseases Network"/>
            <person name="Morimoto M."/>
            <person name="Ryu E."/>
            <person name="Steger B.J."/>
            <person name="Dixit A."/>
            <person name="Saito Y."/>
            <person name="Yoo J."/>
            <person name="van der Ven A.T."/>
            <person name="Hauser N."/>
            <person name="Steinbach P.J."/>
            <person name="Oura K."/>
            <person name="Huang A.Y."/>
            <person name="Kortuem F."/>
            <person name="Ninomiya S."/>
            <person name="Rosenthal E.A."/>
            <person name="Robinson H.K."/>
            <person name="Guegan K."/>
            <person name="Denecke J."/>
            <person name="Subramony S.H."/>
            <person name="Diamonstein C.J."/>
            <person name="Ping J."/>
            <person name="Fenner M."/>
            <person name="Balton E.V."/>
            <person name="Strohbehn S."/>
            <person name="Allworth A."/>
            <person name="Bamshad M.J."/>
            <person name="Gandhi M."/>
            <person name="Dipple K.M."/>
            <person name="Blue E.E."/>
            <person name="Jarvik G.P."/>
            <person name="Lau C.C."/>
            <person name="Holm I.A."/>
            <person name="Weisz-Hubshman M."/>
            <person name="Solomon B.D."/>
            <person name="Nelson S.F."/>
            <person name="Nishino I."/>
            <person name="Adams D.R."/>
            <person name="Kang S."/>
            <person name="Gahl W.A."/>
            <person name="Toro C."/>
            <person name="Myung K."/>
            <person name="Malicdan M.C.V."/>
        </authorList>
    </citation>
    <scope>INTERACTION WITH RFC4</scope>
</reference>
<organism>
    <name type="scientific">Homo sapiens</name>
    <name type="common">Human</name>
    <dbReference type="NCBI Taxonomy" id="9606"/>
    <lineage>
        <taxon>Eukaryota</taxon>
        <taxon>Metazoa</taxon>
        <taxon>Chordata</taxon>
        <taxon>Craniata</taxon>
        <taxon>Vertebrata</taxon>
        <taxon>Euteleostomi</taxon>
        <taxon>Mammalia</taxon>
        <taxon>Eutheria</taxon>
        <taxon>Euarchontoglires</taxon>
        <taxon>Primates</taxon>
        <taxon>Haplorrhini</taxon>
        <taxon>Catarrhini</taxon>
        <taxon>Hominidae</taxon>
        <taxon>Homo</taxon>
    </lineage>
</organism>
<keyword id="KW-0002">3D-structure</keyword>
<keyword id="KW-0025">Alternative splicing</keyword>
<keyword id="KW-0067">ATP-binding</keyword>
<keyword id="KW-0131">Cell cycle</keyword>
<keyword id="KW-0235">DNA replication</keyword>
<keyword id="KW-0238">DNA-binding</keyword>
<keyword id="KW-0547">Nucleotide-binding</keyword>
<keyword id="KW-0539">Nucleus</keyword>
<keyword id="KW-0597">Phosphoprotein</keyword>
<keyword id="KW-1267">Proteomics identification</keyword>
<keyword id="KW-1185">Reference proteome</keyword>
<comment type="function">
    <text evidence="3 4 6 8">Chromosome cohesion factor involved in sister chromatid cohesion and fidelity of chromosome transmission. Component of one of the cell nuclear antigen loader complexes, CTF18-replication factor C (CTF18-RFC), which consists of CTF18, CTF8, DCC1, RFC2, RFC3, RFC4 and RFC5. The CTF18-RFC complex binds to single-stranded and primed DNAs and has weak ATPase activity that is stimulated by the presence of primed DNA, replication protein A (RPA) and by proliferating cell nuclear antigen (PCNA). The CTF18-RFC complex catalyzes the ATP-dependent loading of PCNA onto primed and gapped DNA. Interacts with and stimulates DNA polymerase POLH. During DNA repair synthesis, involved in loading DNA polymerase POLE at the sites of local damage (PubMed:20227374).</text>
</comment>
<comment type="subunit">
    <text evidence="3 4 6 7 9">Component of the CTF18-RFC complex, which consists of CTF18, CTF8, DCC1, RFC2, RFC3, RFC4 and RFC5 (PubMed:12766176, PubMed:12930902, PubMed:39106866). During assembly of the CTF18-RFC complex, CTF18 may first assemble into a subcomplex with RFC2, RFC3, RFC4 and RFC5. CTF18 then interacts directly with CTF8, which in turn interacts with DCC1 (PubMed:12766176, PubMed:12930902). The CTF18-RFC complex associates with PCNA and with DNA polymerase POLH (PubMed:12766176, PubMed:17545166). The CTF18-RFC complex does not interact with the Rad9/Rad1/Hus1 complex (PubMed:12766176). CTF18 interacts with SMC1A and RAD21 (PubMed:12930902). Interacts with DDX11 (PubMed:18499658).</text>
</comment>
<comment type="subcellular location">
    <subcellularLocation>
        <location evidence="3">Nucleus</location>
    </subcellularLocation>
    <text>Associates with chromatin during S phase.</text>
</comment>
<comment type="alternative products">
    <event type="alternative splicing"/>
    <isoform>
        <id>Q8WVB6-1</id>
        <name>1</name>
        <sequence type="displayed"/>
    </isoform>
    <isoform>
        <id>Q8WVB6-2</id>
        <name>2</name>
        <sequence type="described" ref="VSP_034180"/>
    </isoform>
    <isoform>
        <id>Q8WVB6-3</id>
        <name>3</name>
        <sequence type="described" ref="VSP_034179"/>
    </isoform>
</comment>
<comment type="similarity">
    <text evidence="12">Belongs to the activator 1 small subunits family. CTF18 subfamily.</text>
</comment>
<comment type="sequence caution" evidence="12">
    <conflict type="erroneous initiation">
        <sequence resource="EMBL-CDS" id="AAH06437"/>
    </conflict>
</comment>
<comment type="sequence caution" evidence="12">
    <conflict type="erroneous initiation">
        <sequence resource="EMBL-CDS" id="BAB15766"/>
    </conflict>
</comment>
<proteinExistence type="evidence at protein level"/>
<protein>
    <recommendedName>
        <fullName>Chromosome transmission fidelity protein 18 homolog</fullName>
        <shortName>hCTF18</shortName>
    </recommendedName>
    <alternativeName>
        <fullName>CHL12</fullName>
    </alternativeName>
</protein>
<evidence type="ECO:0000255" key="1"/>
<evidence type="ECO:0000256" key="2">
    <source>
        <dbReference type="SAM" id="MobiDB-lite"/>
    </source>
</evidence>
<evidence type="ECO:0000269" key="3">
    <source>
    </source>
</evidence>
<evidence type="ECO:0000269" key="4">
    <source>
    </source>
</evidence>
<evidence type="ECO:0000269" key="5">
    <source>
    </source>
</evidence>
<evidence type="ECO:0000269" key="6">
    <source>
    </source>
</evidence>
<evidence type="ECO:0000269" key="7">
    <source>
    </source>
</evidence>
<evidence type="ECO:0000269" key="8">
    <source>
    </source>
</evidence>
<evidence type="ECO:0000269" key="9">
    <source>
    </source>
</evidence>
<evidence type="ECO:0000303" key="10">
    <source>
    </source>
</evidence>
<evidence type="ECO:0000303" key="11">
    <source>
    </source>
</evidence>
<evidence type="ECO:0000305" key="12"/>
<evidence type="ECO:0007744" key="13">
    <source>
    </source>
</evidence>
<evidence type="ECO:0007744" key="14">
    <source>
    </source>
</evidence>
<evidence type="ECO:0007744" key="15">
    <source>
    </source>
</evidence>
<evidence type="ECO:0007744" key="16">
    <source>
    </source>
</evidence>
<evidence type="ECO:0007744" key="17">
    <source>
    </source>
</evidence>
<evidence type="ECO:0007744" key="18">
    <source>
    </source>
</evidence>
<evidence type="ECO:0007744" key="19">
    <source>
    </source>
</evidence>
<evidence type="ECO:0007829" key="20">
    <source>
        <dbReference type="PDB" id="8UMT"/>
    </source>
</evidence>
<evidence type="ECO:0007829" key="21">
    <source>
        <dbReference type="PDB" id="8UMU"/>
    </source>
</evidence>
<evidence type="ECO:0007829" key="22">
    <source>
        <dbReference type="PDB" id="8UMY"/>
    </source>
</evidence>
<evidence type="ECO:0007829" key="23">
    <source>
        <dbReference type="PDB" id="8UN0"/>
    </source>
</evidence>
<gene>
    <name type="primary">CHTF18</name>
    <name type="synonym">C16orf41</name>
    <name type="synonym">CTF18</name>
</gene>
<accession>Q8WVB6</accession>
<accession>B7ZBA2</accession>
<accession>D3DU68</accession>
<accession>Q7Z6Y4</accession>
<accession>Q7Z6Y6</accession>
<accession>Q9BR83</accession>
<accession>Q9BRG5</accession>
<accession>Q9H7K3</accession>
<name>CTF18_HUMAN</name>
<sequence>MEDYEQELCGVEDDFHNQFAAELEVLAELEGASTPSPSGVPLFTAGRPPRTFEEALARGDAASSPAPAASVGSSQGGARKRQVDADLQPAGSLPHAPRIKRPRLQVVKRLNFRSEEMEEPPPPDSSPTDITPPPSPEDLAELWGHGVSEAAADVGLTRASPAARNPVLRRPPILEDYVHVTSTEGVRAYLVLRADPMAPGVQGSLLHVPWRGGGQLDLLGVSLASLKKQVDGERRERLLQEAQKLSDTLHSLRSGEEEAAQPLGAPEEEPTDGQDASSHCLWVDEFAPRHYTELLSDDFTNRCLLKWLKLWDLVVFGHERPSRKPRPSVEPARVSKEATAPGKWKSHEQVLEEMLEAGLDPSQRPKQKVALLCGPPGLGKTTLAHVIARHAGYSVVEMNASDDRSPEVFRTRIEAATQMESVLGAGGKPNCLVIDEIDGAPVAAINVLLSILNRKGPQEVGPQGPAVPSGGGRRRRAEGGLLMRPIICICNDQFAPSLRQLKQQAFLLHFPPTLPSRLVQRLQEVSLRQGMRADPGVLAALCEKTDNDIRACINTLQFLYSRGQRELSVRDVQATRVGLKDQRRGLFSVWQEVFQLPRAQRRRVGQDPALPADTLLLGDGDAGSLTSASQRFYRVLHAAASAGEHEKVVQGLFDNFLRLRLRDSSLGAVCVALDWLAFDDLLAGAAHHSQSFQLLRYPPFLPVAFHVLFASSHTPRITFPSSQQEAQNRMSQMRNLIQTLVSGIAPATRSRATPQALLLDALCLLLDILAPKLRPVSTQLYSTREKQQLASLVGTMLAYSLTYRQERTPDGQYIYRLEPNVEELCRFPELPARKPLTYQTKQLIAREIEVEKMRRAEASARVENSPQVDGSPPGLEGLLGGIGEKGVHRPAPRNHEQRLEHIMRRAAREEQPEKDFFGRVVVRSTAVPSAGDTAPEQDSVERRMGTAVGRSEVWFRFNEGVSNAVRRSLYIRDLL</sequence>
<dbReference type="EMBL" id="AK024476">
    <property type="protein sequence ID" value="BAB15766.1"/>
    <property type="status" value="ALT_INIT"/>
    <property type="molecule type" value="mRNA"/>
</dbReference>
<dbReference type="EMBL" id="AL031033">
    <property type="status" value="NOT_ANNOTATED_CDS"/>
    <property type="molecule type" value="Genomic_DNA"/>
</dbReference>
<dbReference type="EMBL" id="CH471112">
    <property type="protein sequence ID" value="EAW85706.1"/>
    <property type="molecule type" value="Genomic_DNA"/>
</dbReference>
<dbReference type="EMBL" id="CH471112">
    <property type="protein sequence ID" value="EAW85707.1"/>
    <property type="molecule type" value="Genomic_DNA"/>
</dbReference>
<dbReference type="EMBL" id="CH471112">
    <property type="protein sequence ID" value="EAW85711.1"/>
    <property type="molecule type" value="Genomic_DNA"/>
</dbReference>
<dbReference type="EMBL" id="BC006278">
    <property type="protein sequence ID" value="AAH06278.2"/>
    <property type="molecule type" value="mRNA"/>
</dbReference>
<dbReference type="EMBL" id="BC006437">
    <property type="protein sequence ID" value="AAH06437.1"/>
    <property type="status" value="ALT_INIT"/>
    <property type="molecule type" value="mRNA"/>
</dbReference>
<dbReference type="EMBL" id="BC018184">
    <property type="protein sequence ID" value="AAH18184.1"/>
    <property type="molecule type" value="mRNA"/>
</dbReference>
<dbReference type="CCDS" id="CCDS45371.1">
    <molecule id="Q8WVB6-1"/>
</dbReference>
<dbReference type="RefSeq" id="NP_071375.1">
    <molecule id="Q8WVB6-1"/>
    <property type="nucleotide sequence ID" value="NM_022092.3"/>
</dbReference>
<dbReference type="RefSeq" id="XP_005255528.1">
    <molecule id="Q8WVB6-2"/>
    <property type="nucleotide sequence ID" value="XM_005255471.4"/>
</dbReference>
<dbReference type="RefSeq" id="XP_011520875.1">
    <property type="nucleotide sequence ID" value="XM_011522573.1"/>
</dbReference>
<dbReference type="PDB" id="8UMT">
    <property type="method" value="EM"/>
    <property type="resolution" value="3.33 A"/>
    <property type="chains" value="A=1-975"/>
</dbReference>
<dbReference type="PDB" id="8UMU">
    <property type="method" value="EM"/>
    <property type="resolution" value="3.16 A"/>
    <property type="chains" value="A=1-975"/>
</dbReference>
<dbReference type="PDB" id="8UMV">
    <property type="method" value="EM"/>
    <property type="resolution" value="2.75 A"/>
    <property type="chains" value="A=1-975"/>
</dbReference>
<dbReference type="PDB" id="8UMW">
    <property type="method" value="EM"/>
    <property type="resolution" value="2.93 A"/>
    <property type="chains" value="A=1-975"/>
</dbReference>
<dbReference type="PDB" id="8UMY">
    <property type="method" value="EM"/>
    <property type="resolution" value="2.83 A"/>
    <property type="chains" value="A=1-975"/>
</dbReference>
<dbReference type="PDB" id="8UN0">
    <property type="method" value="EM"/>
    <property type="resolution" value="3.00 A"/>
    <property type="chains" value="A=1-975"/>
</dbReference>
<dbReference type="PDB" id="8UNJ">
    <property type="method" value="EM"/>
    <property type="resolution" value="3.35 A"/>
    <property type="chains" value="A=1-975"/>
</dbReference>
<dbReference type="PDBsum" id="8UMT"/>
<dbReference type="PDBsum" id="8UMU"/>
<dbReference type="PDBsum" id="8UMV"/>
<dbReference type="PDBsum" id="8UMW"/>
<dbReference type="PDBsum" id="8UMY"/>
<dbReference type="PDBsum" id="8UN0"/>
<dbReference type="PDBsum" id="8UNJ"/>
<dbReference type="EMDB" id="EMD-42383"/>
<dbReference type="EMDB" id="EMD-42384"/>
<dbReference type="EMDB" id="EMD-42385"/>
<dbReference type="EMDB" id="EMD-42386"/>
<dbReference type="EMDB" id="EMD-42388"/>
<dbReference type="EMDB" id="EMD-42389"/>
<dbReference type="EMDB" id="EMD-42406"/>
<dbReference type="SMR" id="Q8WVB6"/>
<dbReference type="BioGRID" id="121991">
    <property type="interactions" value="102"/>
</dbReference>
<dbReference type="CORUM" id="Q8WVB6"/>
<dbReference type="FunCoup" id="Q8WVB6">
    <property type="interactions" value="2553"/>
</dbReference>
<dbReference type="IntAct" id="Q8WVB6">
    <property type="interactions" value="54"/>
</dbReference>
<dbReference type="MINT" id="Q8WVB6"/>
<dbReference type="STRING" id="9606.ENSP00000262315"/>
<dbReference type="ChEMBL" id="CHEMBL5465337"/>
<dbReference type="GlyGen" id="Q8WVB6">
    <property type="glycosylation" value="3 sites, 1 O-linked glycan (1 site)"/>
</dbReference>
<dbReference type="iPTMnet" id="Q8WVB6"/>
<dbReference type="PhosphoSitePlus" id="Q8WVB6"/>
<dbReference type="BioMuta" id="CHTF18"/>
<dbReference type="DMDM" id="74751544"/>
<dbReference type="jPOST" id="Q8WVB6"/>
<dbReference type="MassIVE" id="Q8WVB6"/>
<dbReference type="PaxDb" id="9606-ENSP00000262315"/>
<dbReference type="PeptideAtlas" id="Q8WVB6"/>
<dbReference type="ProteomicsDB" id="74770">
    <molecule id="Q8WVB6-1"/>
</dbReference>
<dbReference type="ProteomicsDB" id="74771">
    <molecule id="Q8WVB6-2"/>
</dbReference>
<dbReference type="ProteomicsDB" id="74772">
    <molecule id="Q8WVB6-3"/>
</dbReference>
<dbReference type="Pumba" id="Q8WVB6"/>
<dbReference type="Antibodypedia" id="5118">
    <property type="antibodies" value="176 antibodies from 27 providers"/>
</dbReference>
<dbReference type="DNASU" id="63922"/>
<dbReference type="Ensembl" id="ENST00000262315.14">
    <molecule id="Q8WVB6-1"/>
    <property type="protein sequence ID" value="ENSP00000262315.9"/>
    <property type="gene ID" value="ENSG00000127586.17"/>
</dbReference>
<dbReference type="Ensembl" id="ENST00000455171.6">
    <molecule id="Q8WVB6-2"/>
    <property type="protein sequence ID" value="ENSP00000406252.2"/>
    <property type="gene ID" value="ENSG00000127586.17"/>
</dbReference>
<dbReference type="GeneID" id="63922"/>
<dbReference type="KEGG" id="hsa:63922"/>
<dbReference type="MANE-Select" id="ENST00000262315.14">
    <property type="protein sequence ID" value="ENSP00000262315.9"/>
    <property type="RefSeq nucleotide sequence ID" value="NM_022092.3"/>
    <property type="RefSeq protein sequence ID" value="NP_071375.1"/>
</dbReference>
<dbReference type="UCSC" id="uc002cke.4">
    <molecule id="Q8WVB6-1"/>
    <property type="organism name" value="human"/>
</dbReference>
<dbReference type="AGR" id="HGNC:18435"/>
<dbReference type="CTD" id="63922"/>
<dbReference type="DisGeNET" id="63922"/>
<dbReference type="GeneCards" id="CHTF18"/>
<dbReference type="HGNC" id="HGNC:18435">
    <property type="gene designation" value="CHTF18"/>
</dbReference>
<dbReference type="HPA" id="ENSG00000127586">
    <property type="expression patterns" value="Low tissue specificity"/>
</dbReference>
<dbReference type="MIM" id="613201">
    <property type="type" value="gene"/>
</dbReference>
<dbReference type="neXtProt" id="NX_Q8WVB6"/>
<dbReference type="OpenTargets" id="ENSG00000127586"/>
<dbReference type="PharmGKB" id="PA134908713"/>
<dbReference type="VEuPathDB" id="HostDB:ENSG00000127586"/>
<dbReference type="eggNOG" id="KOG1969">
    <property type="taxonomic scope" value="Eukaryota"/>
</dbReference>
<dbReference type="GeneTree" id="ENSGT00550000075029"/>
<dbReference type="HOGENOM" id="CLU_004894_4_0_1"/>
<dbReference type="InParanoid" id="Q8WVB6"/>
<dbReference type="OMA" id="RWLKGWE"/>
<dbReference type="OrthoDB" id="2195431at2759"/>
<dbReference type="PAN-GO" id="Q8WVB6">
    <property type="GO annotations" value="4 GO annotations based on evolutionary models"/>
</dbReference>
<dbReference type="PhylomeDB" id="Q8WVB6"/>
<dbReference type="TreeFam" id="TF314392"/>
<dbReference type="PathwayCommons" id="Q8WVB6"/>
<dbReference type="Reactome" id="R-HSA-174411">
    <property type="pathway name" value="Polymerase switching on the C-strand of the telomere"/>
</dbReference>
<dbReference type="SignaLink" id="Q8WVB6"/>
<dbReference type="BioGRID-ORCS" id="63922">
    <property type="hits" value="158 hits in 1160 CRISPR screens"/>
</dbReference>
<dbReference type="ChiTaRS" id="CHTF18">
    <property type="organism name" value="human"/>
</dbReference>
<dbReference type="GeneWiki" id="CHTF18"/>
<dbReference type="GenomeRNAi" id="63922"/>
<dbReference type="Pharos" id="Q8WVB6">
    <property type="development level" value="Tbio"/>
</dbReference>
<dbReference type="PRO" id="PR:Q8WVB6"/>
<dbReference type="Proteomes" id="UP000005640">
    <property type="component" value="Chromosome 16"/>
</dbReference>
<dbReference type="RNAct" id="Q8WVB6">
    <property type="molecule type" value="protein"/>
</dbReference>
<dbReference type="Bgee" id="ENSG00000127586">
    <property type="expression patterns" value="Expressed in right testis and 118 other cell types or tissues"/>
</dbReference>
<dbReference type="ExpressionAtlas" id="Q8WVB6">
    <property type="expression patterns" value="baseline and differential"/>
</dbReference>
<dbReference type="GO" id="GO:0031390">
    <property type="term" value="C:Ctf18 RFC-like complex"/>
    <property type="evidence" value="ECO:0000314"/>
    <property type="project" value="UniProtKB"/>
</dbReference>
<dbReference type="GO" id="GO:0005829">
    <property type="term" value="C:cytosol"/>
    <property type="evidence" value="ECO:0000314"/>
    <property type="project" value="HPA"/>
</dbReference>
<dbReference type="GO" id="GO:0016020">
    <property type="term" value="C:membrane"/>
    <property type="evidence" value="ECO:0007005"/>
    <property type="project" value="UniProtKB"/>
</dbReference>
<dbReference type="GO" id="GO:0005654">
    <property type="term" value="C:nucleoplasm"/>
    <property type="evidence" value="ECO:0000314"/>
    <property type="project" value="HPA"/>
</dbReference>
<dbReference type="GO" id="GO:0005634">
    <property type="term" value="C:nucleus"/>
    <property type="evidence" value="ECO:0000318"/>
    <property type="project" value="GO_Central"/>
</dbReference>
<dbReference type="GO" id="GO:0005524">
    <property type="term" value="F:ATP binding"/>
    <property type="evidence" value="ECO:0007669"/>
    <property type="project" value="UniProtKB-KW"/>
</dbReference>
<dbReference type="GO" id="GO:0016887">
    <property type="term" value="F:ATP hydrolysis activity"/>
    <property type="evidence" value="ECO:0007669"/>
    <property type="project" value="InterPro"/>
</dbReference>
<dbReference type="GO" id="GO:0003677">
    <property type="term" value="F:DNA binding"/>
    <property type="evidence" value="ECO:0000318"/>
    <property type="project" value="GO_Central"/>
</dbReference>
<dbReference type="GO" id="GO:0006260">
    <property type="term" value="P:DNA replication"/>
    <property type="evidence" value="ECO:0007669"/>
    <property type="project" value="UniProtKB-KW"/>
</dbReference>
<dbReference type="GO" id="GO:1900264">
    <property type="term" value="P:positive regulation of DNA-directed DNA polymerase activity"/>
    <property type="evidence" value="ECO:0000314"/>
    <property type="project" value="UniProtKB"/>
</dbReference>
<dbReference type="CDD" id="cd00009">
    <property type="entry name" value="AAA"/>
    <property type="match status" value="1"/>
</dbReference>
<dbReference type="CDD" id="cd18140">
    <property type="entry name" value="HLD_clamp_RFC"/>
    <property type="match status" value="1"/>
</dbReference>
<dbReference type="FunFam" id="3.40.50.300:FF:001083">
    <property type="entry name" value="Chromosome transmission fidelity factor 18"/>
    <property type="match status" value="1"/>
</dbReference>
<dbReference type="FunFam" id="1.10.8.60:FF:000074">
    <property type="entry name" value="Chromosome transmission fidelity protein 18"/>
    <property type="match status" value="1"/>
</dbReference>
<dbReference type="Gene3D" id="1.10.8.60">
    <property type="match status" value="1"/>
</dbReference>
<dbReference type="Gene3D" id="3.40.50.300">
    <property type="entry name" value="P-loop containing nucleotide triphosphate hydrolases"/>
    <property type="match status" value="1"/>
</dbReference>
<dbReference type="InterPro" id="IPR003593">
    <property type="entry name" value="AAA+_ATPase"/>
</dbReference>
<dbReference type="InterPro" id="IPR003959">
    <property type="entry name" value="ATPase_AAA_core"/>
</dbReference>
<dbReference type="InterPro" id="IPR053016">
    <property type="entry name" value="CTF18-RFC_complex"/>
</dbReference>
<dbReference type="InterPro" id="IPR027417">
    <property type="entry name" value="P-loop_NTPase"/>
</dbReference>
<dbReference type="InterPro" id="IPR047854">
    <property type="entry name" value="RFC_lid"/>
</dbReference>
<dbReference type="PANTHER" id="PTHR46765">
    <property type="entry name" value="P-LOOP CONTAINING NUCLEOSIDE TRIPHOSPHATE HYDROLASES SUPERFAMILY PROTEIN"/>
    <property type="match status" value="1"/>
</dbReference>
<dbReference type="PANTHER" id="PTHR46765:SF1">
    <property type="entry name" value="P-LOOP CONTAINING NUCLEOSIDE TRIPHOSPHATE HYDROLASES SUPERFAMILY PROTEIN"/>
    <property type="match status" value="1"/>
</dbReference>
<dbReference type="Pfam" id="PF00004">
    <property type="entry name" value="AAA"/>
    <property type="match status" value="1"/>
</dbReference>
<dbReference type="SMART" id="SM00382">
    <property type="entry name" value="AAA"/>
    <property type="match status" value="1"/>
</dbReference>
<dbReference type="SUPFAM" id="SSF52540">
    <property type="entry name" value="P-loop containing nucleoside triphosphate hydrolases"/>
    <property type="match status" value="1"/>
</dbReference>
<feature type="chain" id="PRO_0000340081" description="Chromosome transmission fidelity protein 18 homolog">
    <location>
        <begin position="1"/>
        <end position="975"/>
    </location>
</feature>
<feature type="region of interest" description="Disordered" evidence="2">
    <location>
        <begin position="30"/>
        <end position="83"/>
    </location>
</feature>
<feature type="region of interest" description="Disordered" evidence="2">
    <location>
        <begin position="114"/>
        <end position="141"/>
    </location>
</feature>
<feature type="region of interest" description="Disordered" evidence="2">
    <location>
        <begin position="246"/>
        <end position="276"/>
    </location>
</feature>
<feature type="region of interest" description="Disordered" evidence="2">
    <location>
        <begin position="320"/>
        <end position="346"/>
    </location>
</feature>
<feature type="region of interest" description="Disordered" evidence="2">
    <location>
        <begin position="858"/>
        <end position="896"/>
    </location>
</feature>
<feature type="compositionally biased region" description="Low complexity" evidence="2">
    <location>
        <begin position="58"/>
        <end position="77"/>
    </location>
</feature>
<feature type="compositionally biased region" description="Pro residues" evidence="2">
    <location>
        <begin position="122"/>
        <end position="136"/>
    </location>
</feature>
<feature type="binding site" evidence="1">
    <location>
        <begin position="374"/>
        <end position="381"/>
    </location>
    <ligand>
        <name>ATP</name>
        <dbReference type="ChEBI" id="CHEBI:30616"/>
    </ligand>
</feature>
<feature type="modified residue" description="Phosphothreonine" evidence="19">
    <location>
        <position position="51"/>
    </location>
</feature>
<feature type="modified residue" description="Phosphoserine" evidence="13 16 19">
    <location>
        <position position="64"/>
    </location>
</feature>
<feature type="modified residue" description="Phosphoserine" evidence="14 19">
    <location>
        <position position="225"/>
    </location>
</feature>
<feature type="modified residue" description="Phosphoserine" evidence="13 15 16 17 18 19">
    <location>
        <position position="871"/>
    </location>
</feature>
<feature type="splice variant" id="VSP_034179" description="In isoform 3." evidence="10">
    <location>
        <begin position="1"/>
        <end position="418"/>
    </location>
</feature>
<feature type="splice variant" id="VSP_034180" description="In isoform 2." evidence="11">
    <original>H</original>
    <variation>HGRLAALPQGLRSGREAEEASGSLHVSPP</variation>
    <location>
        <position position="95"/>
    </location>
</feature>
<feature type="sequence variant" id="VAR_043990" description="In dbSNP:rs2277902.">
    <original>S</original>
    <variation>F</variation>
    <location>
        <position position="63"/>
    </location>
</feature>
<feature type="sequence variant" id="VAR_043991" description="In dbSNP:rs2277901." evidence="5">
    <original>Q</original>
    <variation>P</variation>
    <location>
        <position position="82"/>
    </location>
</feature>
<feature type="sequence variant" id="VAR_043992" description="In dbSNP:rs3765263." evidence="5">
    <original>K</original>
    <variation>R</variation>
    <location>
        <position position="244"/>
    </location>
</feature>
<feature type="sequence variant" id="VAR_043993" description="In dbSNP:rs34595992.">
    <original>A</original>
    <variation>S</variation>
    <location>
        <position position="466"/>
    </location>
</feature>
<feature type="sequence variant" id="VAR_043994" description="In dbSNP:rs2294451." evidence="5">
    <original>P</original>
    <variation>L</variation>
    <location>
        <position position="928"/>
    </location>
</feature>
<feature type="strand" evidence="22">
    <location>
        <begin position="168"/>
        <end position="170"/>
    </location>
</feature>
<feature type="strand" evidence="22">
    <location>
        <begin position="173"/>
        <end position="175"/>
    </location>
</feature>
<feature type="strand" evidence="22">
    <location>
        <begin position="177"/>
        <end position="181"/>
    </location>
</feature>
<feature type="strand" evidence="22">
    <location>
        <begin position="187"/>
        <end position="191"/>
    </location>
</feature>
<feature type="turn" evidence="22">
    <location>
        <begin position="277"/>
        <end position="279"/>
    </location>
</feature>
<feature type="helix" evidence="22">
    <location>
        <begin position="282"/>
        <end position="285"/>
    </location>
</feature>
<feature type="helix" evidence="21">
    <location>
        <begin position="291"/>
        <end position="293"/>
    </location>
</feature>
<feature type="helix" evidence="22">
    <location>
        <begin position="298"/>
        <end position="308"/>
    </location>
</feature>
<feature type="helix" evidence="22">
    <location>
        <begin position="309"/>
        <end position="311"/>
    </location>
</feature>
<feature type="turn" evidence="22">
    <location>
        <begin position="312"/>
        <end position="314"/>
    </location>
</feature>
<feature type="helix" evidence="22">
    <location>
        <begin position="347"/>
        <end position="355"/>
    </location>
</feature>
<feature type="strand" evidence="22">
    <location>
        <begin position="369"/>
        <end position="373"/>
    </location>
</feature>
<feature type="strand" evidence="22">
    <location>
        <begin position="376"/>
        <end position="379"/>
    </location>
</feature>
<feature type="helix" evidence="22">
    <location>
        <begin position="380"/>
        <end position="390"/>
    </location>
</feature>
<feature type="strand" evidence="22">
    <location>
        <begin position="394"/>
        <end position="398"/>
    </location>
</feature>
<feature type="turn" evidence="21">
    <location>
        <begin position="400"/>
        <end position="402"/>
    </location>
</feature>
<feature type="helix" evidence="22">
    <location>
        <begin position="406"/>
        <end position="417"/>
    </location>
</feature>
<feature type="strand" evidence="21">
    <location>
        <begin position="423"/>
        <end position="425"/>
    </location>
</feature>
<feature type="strand" evidence="22">
    <location>
        <begin position="430"/>
        <end position="435"/>
    </location>
</feature>
<feature type="helix" evidence="22">
    <location>
        <begin position="437"/>
        <end position="439"/>
    </location>
</feature>
<feature type="helix" evidence="22">
    <location>
        <begin position="442"/>
        <end position="452"/>
    </location>
</feature>
<feature type="strand" evidence="22">
    <location>
        <begin position="486"/>
        <end position="491"/>
    </location>
</feature>
<feature type="helix" evidence="22">
    <location>
        <begin position="496"/>
        <end position="498"/>
    </location>
</feature>
<feature type="helix" evidence="22">
    <location>
        <begin position="499"/>
        <end position="502"/>
    </location>
</feature>
<feature type="strand" evidence="22">
    <location>
        <begin position="505"/>
        <end position="509"/>
    </location>
</feature>
<feature type="helix" evidence="22">
    <location>
        <begin position="515"/>
        <end position="528"/>
    </location>
</feature>
<feature type="helix" evidence="22">
    <location>
        <begin position="535"/>
        <end position="544"/>
    </location>
</feature>
<feature type="turn" evidence="20">
    <location>
        <begin position="545"/>
        <end position="547"/>
    </location>
</feature>
<feature type="helix" evidence="22">
    <location>
        <begin position="549"/>
        <end position="560"/>
    </location>
</feature>
<feature type="turn" evidence="22">
    <location>
        <begin position="561"/>
        <end position="563"/>
    </location>
</feature>
<feature type="helix" evidence="22">
    <location>
        <begin position="569"/>
        <end position="573"/>
    </location>
</feature>
<feature type="strand" evidence="23">
    <location>
        <begin position="574"/>
        <end position="578"/>
    </location>
</feature>
<feature type="helix" evidence="22">
    <location>
        <begin position="586"/>
        <end position="594"/>
    </location>
</feature>
<feature type="helix" evidence="22">
    <location>
        <begin position="628"/>
        <end position="642"/>
    </location>
</feature>
<feature type="helix" evidence="22">
    <location>
        <begin position="645"/>
        <end position="655"/>
    </location>
</feature>
<feature type="strand" evidence="22">
    <location>
        <begin position="656"/>
        <end position="659"/>
    </location>
</feature>
<feature type="helix" evidence="22">
    <location>
        <begin position="667"/>
        <end position="686"/>
    </location>
</feature>
<feature type="helix" evidence="22">
    <location>
        <begin position="692"/>
        <end position="694"/>
    </location>
</feature>
<feature type="helix" evidence="22">
    <location>
        <begin position="700"/>
        <end position="708"/>
    </location>
</feature>
<feature type="strand" evidence="23">
    <location>
        <begin position="711"/>
        <end position="713"/>
    </location>
</feature>
<feature type="helix" evidence="22">
    <location>
        <begin position="722"/>
        <end position="741"/>
    </location>
</feature>
<feature type="helix" evidence="22">
    <location>
        <begin position="746"/>
        <end position="749"/>
    </location>
</feature>
<feature type="helix" evidence="22">
    <location>
        <begin position="754"/>
        <end position="759"/>
    </location>
</feature>
<feature type="turn" evidence="22">
    <location>
        <begin position="760"/>
        <end position="762"/>
    </location>
</feature>
<feature type="helix" evidence="22">
    <location>
        <begin position="763"/>
        <end position="768"/>
    </location>
</feature>
<feature type="helix" evidence="22">
    <location>
        <begin position="778"/>
        <end position="780"/>
    </location>
</feature>
<feature type="helix" evidence="22">
    <location>
        <begin position="783"/>
        <end position="798"/>
    </location>
</feature>
<feature type="strand" evidence="22">
    <location>
        <begin position="803"/>
        <end position="807"/>
    </location>
</feature>
<feature type="strand" evidence="22">
    <location>
        <begin position="813"/>
        <end position="819"/>
    </location>
</feature>
<feature type="helix" evidence="22">
    <location>
        <begin position="822"/>
        <end position="825"/>
    </location>
</feature>
<feature type="strand" evidence="20">
    <location>
        <begin position="828"/>
        <end position="830"/>
    </location>
</feature>
<feature type="helix" evidence="22">
    <location>
        <begin position="838"/>
        <end position="862"/>
    </location>
</feature>